<reference key="1">
    <citation type="journal article" date="1992" name="Virology">
        <title>The DNA sequence of equine herpesvirus-1.</title>
        <authorList>
            <person name="Telford E.A.R."/>
            <person name="Watson M.S."/>
            <person name="McBride K."/>
            <person name="Davison A.J."/>
        </authorList>
    </citation>
    <scope>NUCLEOTIDE SEQUENCE [LARGE SCALE GENOMIC DNA]</scope>
</reference>
<reference key="2">
    <citation type="journal article" date="1993" name="Gene">
        <title>Sequence analysis of thymidine kinase-defective mutants of equine herpesvirus-1 (EHV-1).</title>
        <authorList>
            <person name="Corrochano L.M."/>
            <person name="Madueno F."/>
            <person name="Field H.J."/>
            <person name="de la Fuente R."/>
        </authorList>
    </citation>
    <scope>NUCLEOTIDE SEQUENCE [GENOMIC DNA]</scope>
</reference>
<gene>
    <name evidence="1" type="primary">TK</name>
    <name type="ordered locus">38</name>
</gene>
<organism>
    <name type="scientific">Equine herpesvirus 1 (strain Ab4p)</name>
    <name type="common">EHV-1</name>
    <name type="synonym">Equine abortion virus</name>
    <dbReference type="NCBI Taxonomy" id="31520"/>
    <lineage>
        <taxon>Viruses</taxon>
        <taxon>Duplodnaviria</taxon>
        <taxon>Heunggongvirae</taxon>
        <taxon>Peploviricota</taxon>
        <taxon>Herviviricetes</taxon>
        <taxon>Herpesvirales</taxon>
        <taxon>Orthoherpesviridae</taxon>
        <taxon>Alphaherpesvirinae</taxon>
        <taxon>Varicellovirus</taxon>
        <taxon>Varicellovirus equidalpha1</taxon>
        <taxon>Equid alphaherpesvirus 1</taxon>
    </lineage>
</organism>
<accession>P69185</accession>
<accession>P09100</accession>
<accession>P28856</accession>
<keyword id="KW-0067">ATP-binding</keyword>
<keyword id="KW-0237">DNA synthesis</keyword>
<keyword id="KW-0244">Early protein</keyword>
<keyword id="KW-0418">Kinase</keyword>
<keyword id="KW-0547">Nucleotide-binding</keyword>
<keyword id="KW-1185">Reference proteome</keyword>
<keyword id="KW-0808">Transferase</keyword>
<comment type="function">
    <text evidence="1">Catalyzes the transfer of the gamma-phospho group of ATP to thymidine to generate dTMP in the salvage pathway of pyrimidine synthesis. The dTMP serves as a substrate for DNA polymerase during viral DNA replication. Allows the virus to be reactivated and to grow in non-proliferative cells lacking a high concentration of phosphorylated nucleic acid precursors.</text>
</comment>
<comment type="catalytic activity">
    <reaction evidence="1">
        <text>thymidine + ATP = dTMP + ADP + H(+)</text>
        <dbReference type="Rhea" id="RHEA:19129"/>
        <dbReference type="ChEBI" id="CHEBI:15378"/>
        <dbReference type="ChEBI" id="CHEBI:17748"/>
        <dbReference type="ChEBI" id="CHEBI:30616"/>
        <dbReference type="ChEBI" id="CHEBI:63528"/>
        <dbReference type="ChEBI" id="CHEBI:456216"/>
        <dbReference type="EC" id="2.7.1.21"/>
    </reaction>
</comment>
<comment type="subunit">
    <text evidence="1">Homodimer.</text>
</comment>
<comment type="similarity">
    <text evidence="1">Belongs to the herpesviridae thymidine kinase family.</text>
</comment>
<organismHost>
    <name type="scientific">Equus caballus</name>
    <name type="common">Horse</name>
    <dbReference type="NCBI Taxonomy" id="9796"/>
</organismHost>
<evidence type="ECO:0000255" key="1">
    <source>
        <dbReference type="HAMAP-Rule" id="MF_04029"/>
    </source>
</evidence>
<protein>
    <recommendedName>
        <fullName evidence="1">Thymidine kinase</fullName>
        <ecNumber evidence="1">2.7.1.21</ecNumber>
    </recommendedName>
</protein>
<sequence>MAARVPSGEARRSASGAPVRRQVTIVRIYLDGVYGIGKSTTGRVMASAASGGSPTLYFPEPMAYWRTLFEADVISGIYDTQNRKQQGDLAADDAASITAHYQSRFTTPYLILHDHTFGLFGGDSLQRGTRPDLTVVFDRHPVASAVCFPAARYLIGDMSMCALIAMVATLPREPQGGNIVVTTLNVDEHVRRLRTRARIGEQIDMKLIATLRNVYSMLANTSNFLRSGRVWRDGWGELPLSCETYKHRATQMDAFQERESPELSDTLFAMFKTPELLDDRGVILEVHAWALDALMLKLRNLSVFCADLSGTPRQCAATVESLIPLMSSTLSDSESASSLERAARTFNAEMGV</sequence>
<dbReference type="EC" id="2.7.1.21" evidence="1"/>
<dbReference type="EMBL" id="AY665713">
    <property type="protein sequence ID" value="AAT67296.1"/>
    <property type="molecule type" value="Genomic_DNA"/>
</dbReference>
<dbReference type="EMBL" id="X67961">
    <property type="protein sequence ID" value="CAA48144.1"/>
    <property type="molecule type" value="Genomic_DNA"/>
</dbReference>
<dbReference type="PIR" id="S01995">
    <property type="entry name" value="KIBED2"/>
</dbReference>
<dbReference type="SMR" id="P69185"/>
<dbReference type="KEGG" id="vg:1487533"/>
<dbReference type="Proteomes" id="UP000001189">
    <property type="component" value="Segment"/>
</dbReference>
<dbReference type="GO" id="GO:0005524">
    <property type="term" value="F:ATP binding"/>
    <property type="evidence" value="ECO:0007669"/>
    <property type="project" value="UniProtKB-KW"/>
</dbReference>
<dbReference type="GO" id="GO:0004797">
    <property type="term" value="F:thymidine kinase activity"/>
    <property type="evidence" value="ECO:0007669"/>
    <property type="project" value="UniProtKB-EC"/>
</dbReference>
<dbReference type="GO" id="GO:0071897">
    <property type="term" value="P:DNA biosynthetic process"/>
    <property type="evidence" value="ECO:0007669"/>
    <property type="project" value="UniProtKB-KW"/>
</dbReference>
<dbReference type="GO" id="GO:0006230">
    <property type="term" value="P:TMP biosynthetic process"/>
    <property type="evidence" value="ECO:0007669"/>
    <property type="project" value="InterPro"/>
</dbReference>
<dbReference type="Gene3D" id="3.40.50.300">
    <property type="entry name" value="P-loop containing nucleotide triphosphate hydrolases"/>
    <property type="match status" value="1"/>
</dbReference>
<dbReference type="HAMAP" id="MF_04029">
    <property type="entry name" value="HSV_KITH"/>
    <property type="match status" value="1"/>
</dbReference>
<dbReference type="InterPro" id="IPR001889">
    <property type="entry name" value="Herpes_TK"/>
</dbReference>
<dbReference type="InterPro" id="IPR027417">
    <property type="entry name" value="P-loop_NTPase"/>
</dbReference>
<dbReference type="Pfam" id="PF00693">
    <property type="entry name" value="Herpes_TK"/>
    <property type="match status" value="1"/>
</dbReference>
<dbReference type="SUPFAM" id="SSF52540">
    <property type="entry name" value="P-loop containing nucleoside triphosphate hydrolases"/>
    <property type="match status" value="1"/>
</dbReference>
<feature type="chain" id="PRO_0000175066" description="Thymidine kinase">
    <location>
        <begin position="1"/>
        <end position="352"/>
    </location>
</feature>
<feature type="active site" description="Proton acceptor" evidence="1">
    <location>
        <position position="60"/>
    </location>
</feature>
<feature type="binding site" evidence="1">
    <location>
        <begin position="32"/>
        <end position="39"/>
    </location>
    <ligand>
        <name>ATP</name>
        <dbReference type="ChEBI" id="CHEBI:30616"/>
    </ligand>
</feature>
<feature type="binding site" evidence="1">
    <location>
        <position position="78"/>
    </location>
    <ligand>
        <name>substrate</name>
    </ligand>
</feature>
<feature type="binding site" evidence="1">
    <location>
        <position position="102"/>
    </location>
    <ligand>
        <name>substrate</name>
    </ligand>
</feature>
<feature type="binding site" evidence="1">
    <location>
        <position position="192"/>
    </location>
    <ligand>
        <name>ATP</name>
        <dbReference type="ChEBI" id="CHEBI:30616"/>
    </ligand>
</feature>
<feature type="binding site" evidence="1">
    <location>
        <position position="198"/>
    </location>
    <ligand>
        <name>substrate</name>
    </ligand>
</feature>
<name>KITH_EHV1B</name>
<proteinExistence type="inferred from homology"/>